<name>BRE1_DEBHA</name>
<reference key="1">
    <citation type="journal article" date="2004" name="Nature">
        <title>Genome evolution in yeasts.</title>
        <authorList>
            <person name="Dujon B."/>
            <person name="Sherman D."/>
            <person name="Fischer G."/>
            <person name="Durrens P."/>
            <person name="Casaregola S."/>
            <person name="Lafontaine I."/>
            <person name="de Montigny J."/>
            <person name="Marck C."/>
            <person name="Neuveglise C."/>
            <person name="Talla E."/>
            <person name="Goffard N."/>
            <person name="Frangeul L."/>
            <person name="Aigle M."/>
            <person name="Anthouard V."/>
            <person name="Babour A."/>
            <person name="Barbe V."/>
            <person name="Barnay S."/>
            <person name="Blanchin S."/>
            <person name="Beckerich J.-M."/>
            <person name="Beyne E."/>
            <person name="Bleykasten C."/>
            <person name="Boisrame A."/>
            <person name="Boyer J."/>
            <person name="Cattolico L."/>
            <person name="Confanioleri F."/>
            <person name="de Daruvar A."/>
            <person name="Despons L."/>
            <person name="Fabre E."/>
            <person name="Fairhead C."/>
            <person name="Ferry-Dumazet H."/>
            <person name="Groppi A."/>
            <person name="Hantraye F."/>
            <person name="Hennequin C."/>
            <person name="Jauniaux N."/>
            <person name="Joyet P."/>
            <person name="Kachouri R."/>
            <person name="Kerrest A."/>
            <person name="Koszul R."/>
            <person name="Lemaire M."/>
            <person name="Lesur I."/>
            <person name="Ma L."/>
            <person name="Muller H."/>
            <person name="Nicaud J.-M."/>
            <person name="Nikolski M."/>
            <person name="Oztas S."/>
            <person name="Ozier-Kalogeropoulos O."/>
            <person name="Pellenz S."/>
            <person name="Potier S."/>
            <person name="Richard G.-F."/>
            <person name="Straub M.-L."/>
            <person name="Suleau A."/>
            <person name="Swennen D."/>
            <person name="Tekaia F."/>
            <person name="Wesolowski-Louvel M."/>
            <person name="Westhof E."/>
            <person name="Wirth B."/>
            <person name="Zeniou-Meyer M."/>
            <person name="Zivanovic Y."/>
            <person name="Bolotin-Fukuhara M."/>
            <person name="Thierry A."/>
            <person name="Bouchier C."/>
            <person name="Caudron B."/>
            <person name="Scarpelli C."/>
            <person name="Gaillardin C."/>
            <person name="Weissenbach J."/>
            <person name="Wincker P."/>
            <person name="Souciet J.-L."/>
        </authorList>
    </citation>
    <scope>NUCLEOTIDE SEQUENCE [LARGE SCALE GENOMIC DNA]</scope>
    <source>
        <strain>ATCC 36239 / CBS 767 / BCRC 21394 / JCM 1990 / NBRC 0083 / IGC 2968</strain>
    </source>
</reference>
<organism>
    <name type="scientific">Debaryomyces hansenii (strain ATCC 36239 / CBS 767 / BCRC 21394 / JCM 1990 / NBRC 0083 / IGC 2968)</name>
    <name type="common">Yeast</name>
    <name type="synonym">Torulaspora hansenii</name>
    <dbReference type="NCBI Taxonomy" id="284592"/>
    <lineage>
        <taxon>Eukaryota</taxon>
        <taxon>Fungi</taxon>
        <taxon>Dikarya</taxon>
        <taxon>Ascomycota</taxon>
        <taxon>Saccharomycotina</taxon>
        <taxon>Pichiomycetes</taxon>
        <taxon>Debaryomycetaceae</taxon>
        <taxon>Debaryomyces</taxon>
    </lineage>
</organism>
<gene>
    <name type="primary">BRE1</name>
    <name type="ordered locus">DEHA2B07986g</name>
</gene>
<feature type="chain" id="PRO_0000055851" description="E3 ubiquitin-protein ligase BRE1">
    <location>
        <begin position="1"/>
        <end position="691"/>
    </location>
</feature>
<feature type="zinc finger region" description="RING-type" evidence="3">
    <location>
        <begin position="639"/>
        <end position="678"/>
    </location>
</feature>
<feature type="region of interest" description="Disordered" evidence="4">
    <location>
        <begin position="1"/>
        <end position="24"/>
    </location>
</feature>
<feature type="region of interest" description="Disordered" evidence="4">
    <location>
        <begin position="211"/>
        <end position="231"/>
    </location>
</feature>
<feature type="coiled-coil region" evidence="2">
    <location>
        <begin position="49"/>
        <end position="83"/>
    </location>
</feature>
<feature type="coiled-coil region" evidence="2">
    <location>
        <begin position="147"/>
        <end position="459"/>
    </location>
</feature>
<feature type="coiled-coil region" evidence="2">
    <location>
        <begin position="491"/>
        <end position="620"/>
    </location>
</feature>
<feature type="compositionally biased region" description="Basic and acidic residues" evidence="4">
    <location>
        <begin position="1"/>
        <end position="19"/>
    </location>
</feature>
<feature type="compositionally biased region" description="Basic and acidic residues" evidence="4">
    <location>
        <begin position="217"/>
        <end position="231"/>
    </location>
</feature>
<comment type="function">
    <text evidence="1">E3 ubiquitin-protein ligase that mediates monoubiquitination of histone H2B to form H2BK123ub1. H2BK123ub1 gives a specific tag for epigenetic transcriptional activation and is also a prerequisite for H3K4me and H3K79me formation.</text>
</comment>
<comment type="catalytic activity">
    <reaction evidence="1">
        <text>S-ubiquitinyl-[E2 ubiquitin-conjugating enzyme]-L-cysteine + [acceptor protein]-L-lysine = [E2 ubiquitin-conjugating enzyme]-L-cysteine + N(6)-ubiquitinyl-[acceptor protein]-L-lysine.</text>
        <dbReference type="EC" id="2.3.2.27"/>
    </reaction>
</comment>
<comment type="pathway">
    <text>Protein modification; protein ubiquitination.</text>
</comment>
<comment type="subcellular location">
    <subcellularLocation>
        <location evidence="1">Nucleus</location>
    </subcellularLocation>
</comment>
<comment type="similarity">
    <text evidence="5">Belongs to the BRE1 family.</text>
</comment>
<dbReference type="EC" id="2.3.2.27" evidence="1"/>
<dbReference type="EMBL" id="CR382134">
    <property type="protein sequence ID" value="CAG85307.2"/>
    <property type="molecule type" value="Genomic_DNA"/>
</dbReference>
<dbReference type="RefSeq" id="XP_457303.2">
    <property type="nucleotide sequence ID" value="XM_457303.1"/>
</dbReference>
<dbReference type="SMR" id="Q6BWW6"/>
<dbReference type="FunCoup" id="Q6BWW6">
    <property type="interactions" value="951"/>
</dbReference>
<dbReference type="STRING" id="284592.Q6BWW6"/>
<dbReference type="GeneID" id="2913667"/>
<dbReference type="KEGG" id="dha:DEHA2B07986g"/>
<dbReference type="VEuPathDB" id="FungiDB:DEHA2B07986g"/>
<dbReference type="eggNOG" id="KOG0978">
    <property type="taxonomic scope" value="Eukaryota"/>
</dbReference>
<dbReference type="HOGENOM" id="CLU_019713_1_0_1"/>
<dbReference type="InParanoid" id="Q6BWW6"/>
<dbReference type="OMA" id="YRQMQEY"/>
<dbReference type="OrthoDB" id="654191at2759"/>
<dbReference type="UniPathway" id="UPA00143"/>
<dbReference type="Proteomes" id="UP000000599">
    <property type="component" value="Chromosome B"/>
</dbReference>
<dbReference type="GO" id="GO:0033503">
    <property type="term" value="C:HULC complex"/>
    <property type="evidence" value="ECO:0007669"/>
    <property type="project" value="TreeGrafter"/>
</dbReference>
<dbReference type="GO" id="GO:0005634">
    <property type="term" value="C:nucleus"/>
    <property type="evidence" value="ECO:0007669"/>
    <property type="project" value="UniProtKB-SubCell"/>
</dbReference>
<dbReference type="GO" id="GO:0061630">
    <property type="term" value="F:ubiquitin protein ligase activity"/>
    <property type="evidence" value="ECO:0007669"/>
    <property type="project" value="TreeGrafter"/>
</dbReference>
<dbReference type="GO" id="GO:0008270">
    <property type="term" value="F:zinc ion binding"/>
    <property type="evidence" value="ECO:0007669"/>
    <property type="project" value="UniProtKB-KW"/>
</dbReference>
<dbReference type="GO" id="GO:0006325">
    <property type="term" value="P:chromatin organization"/>
    <property type="evidence" value="ECO:0007669"/>
    <property type="project" value="UniProtKB-KW"/>
</dbReference>
<dbReference type="GO" id="GO:0016567">
    <property type="term" value="P:protein ubiquitination"/>
    <property type="evidence" value="ECO:0007669"/>
    <property type="project" value="UniProtKB-UniPathway"/>
</dbReference>
<dbReference type="CDD" id="cd16499">
    <property type="entry name" value="RING-HC_Bre1-like"/>
    <property type="match status" value="1"/>
</dbReference>
<dbReference type="FunFam" id="3.30.40.10:FF:000414">
    <property type="entry name" value="E3 ubiquitin protein ligase"/>
    <property type="match status" value="1"/>
</dbReference>
<dbReference type="Gene3D" id="3.30.40.10">
    <property type="entry name" value="Zinc/RING finger domain, C3HC4 (zinc finger)"/>
    <property type="match status" value="1"/>
</dbReference>
<dbReference type="InterPro" id="IPR013956">
    <property type="entry name" value="E3_ubiquit_lig_Bre1"/>
</dbReference>
<dbReference type="InterPro" id="IPR001841">
    <property type="entry name" value="Znf_RING"/>
</dbReference>
<dbReference type="InterPro" id="IPR013083">
    <property type="entry name" value="Znf_RING/FYVE/PHD"/>
</dbReference>
<dbReference type="PANTHER" id="PTHR23163:SF0">
    <property type="entry name" value="E3 UBIQUITIN-PROTEIN LIGASE BRE1"/>
    <property type="match status" value="1"/>
</dbReference>
<dbReference type="PANTHER" id="PTHR23163">
    <property type="entry name" value="RING FINGER PROTEIN-RELATED"/>
    <property type="match status" value="1"/>
</dbReference>
<dbReference type="Pfam" id="PF08647">
    <property type="entry name" value="BRE1"/>
    <property type="match status" value="1"/>
</dbReference>
<dbReference type="Pfam" id="PF13923">
    <property type="entry name" value="zf-C3HC4_2"/>
    <property type="match status" value="1"/>
</dbReference>
<dbReference type="SMART" id="SM00184">
    <property type="entry name" value="RING"/>
    <property type="match status" value="1"/>
</dbReference>
<dbReference type="SUPFAM" id="SSF57850">
    <property type="entry name" value="RING/U-box"/>
    <property type="match status" value="1"/>
</dbReference>
<dbReference type="PROSITE" id="PS50089">
    <property type="entry name" value="ZF_RING_2"/>
    <property type="match status" value="1"/>
</dbReference>
<evidence type="ECO:0000250" key="1">
    <source>
        <dbReference type="UniProtKB" id="Q07457"/>
    </source>
</evidence>
<evidence type="ECO:0000255" key="2"/>
<evidence type="ECO:0000255" key="3">
    <source>
        <dbReference type="PROSITE-ProRule" id="PRU00175"/>
    </source>
</evidence>
<evidence type="ECO:0000256" key="4">
    <source>
        <dbReference type="SAM" id="MobiDB-lite"/>
    </source>
</evidence>
<evidence type="ECO:0000305" key="5"/>
<sequence length="691" mass="79669">MDHDNDKKRLHEDSDNSEIKKHKPLDVLSEDGPLTQKDVVYFKKEAIWRQMRSYKQKCTLLTRDLNDIKSNYESNERKINVLDSWYESIINLFGVKKESNVELNETILIQLTNVPIGDLDALLEKRRAQLLTILSPIIENSKLSNIDKSDVLEKIEVLNAEVATLKSENNTLSKLKSQFESKVEDLQAQLLTLVKDNDRRSSKTLQRIDESLTNGSDVKEEASETVKSEVNKDTTVKNENSVDNEEFERISSEIEELKSDNRLLKESMNQINTNYDKVVKENLQLSDKLENLNENDLINSVSYQELAAHNKQLNESVNNLQKINDTTVNKLNELENKQTNVKHLLDKELREENETLKQQLQKSENDLVRIRTARDELLSKQTILKADFENQTTNDELNKLNKVLNERINALESERHETGDNSKISELSKDELIQRINMLNSEIKEIEQAFQETRENSLSKLMSVTDQENMVKKLTIEKTKADQKYFASMRLKDSLSSENKILKTQINKSQELVSKLNDLEKSYLDKIEILTKSNNDFKIIRQSALQENSKLQESLRAIDVRKASLEKELSGMKDKYSDKVQENTSFTQELNEKNLMMGKLEHKLKSTESLLKKYKTNNTSSILQEDERQLEALRSIAKCSVCSKNWKDTAITVCGHVFCSGCTQERLAARLRRCPTCNKGFSANDLLSIHL</sequence>
<keyword id="KW-0156">Chromatin regulator</keyword>
<keyword id="KW-0175">Coiled coil</keyword>
<keyword id="KW-0479">Metal-binding</keyword>
<keyword id="KW-0539">Nucleus</keyword>
<keyword id="KW-1185">Reference proteome</keyword>
<keyword id="KW-0808">Transferase</keyword>
<keyword id="KW-0833">Ubl conjugation pathway</keyword>
<keyword id="KW-0862">Zinc</keyword>
<keyword id="KW-0863">Zinc-finger</keyword>
<proteinExistence type="inferred from homology"/>
<accession>Q6BWW6</accession>
<protein>
    <recommendedName>
        <fullName>E3 ubiquitin-protein ligase BRE1</fullName>
        <ecNumber evidence="1">2.3.2.27</ecNumber>
    </recommendedName>
    <alternativeName>
        <fullName evidence="5">RING-type E3 ubiquitin transferase BRE1</fullName>
    </alternativeName>
</protein>